<name>BGAL2_BACSU</name>
<proteinExistence type="evidence at protein level"/>
<gene>
    <name evidence="6" type="primary">ganA</name>
    <name evidence="5" type="synonym">galO</name>
    <name type="synonym">lacA</name>
    <name type="synonym">yvfN</name>
    <name type="ordered locus">BSU34130</name>
</gene>
<comment type="function">
    <text evidence="3 4">Involved in galactan degradation (PubMed:27501980). Hydrolyzes galactooligosaccharides released by the endo-beta-1,4-galactanase GanB from galactan (PubMed:17056685, PubMed:27501980). Degrades galactotetraose, galactotriose and galactobiose, generating galactose as the end product (PubMed:27501980). It is unable to use lactose (PubMed:17056685). In vitro, shows maximal activity with o-nitrophenyl-beta-D-galactopyranoside (ONPG) and p-nitrophenyl-beta-D-galactopyranoside (PNPG) as substrates, trace activity with p-nitrophenyl-alpha-L-arabinopyranoside and o-nitrophenyl-beta-D-fucopyranoside as substrates, but no activity with p-nitrophenyl-alpha-D-galactopyranoside, p-nitrophenyl-beta-D-glucopyranoside, o-nitrophenyl-beta-D-xylopyranoside, p-nitrophenyl-beta-D-mannopyranoside or p-nitrophenyl-alpha-L-arabinofuranoside as substrates (PubMed:17056685).</text>
</comment>
<comment type="catalytic activity">
    <reaction evidence="3 4">
        <text>Hydrolysis of terminal non-reducing beta-D-galactose residues in beta-D-galactosides.</text>
        <dbReference type="EC" id="3.2.1.23"/>
    </reaction>
</comment>
<comment type="activity regulation">
    <text evidence="3">Inhibited by zinc, cobalt and copper ions.</text>
</comment>
<comment type="biophysicochemical properties">
    <phDependence>
        <text evidence="3">Optimum pH is 6.0-6.5.</text>
    </phDependence>
    <temperatureDependence>
        <text evidence="3">Optimum temperature is 50 degrees Celsius. Thermolabile above 50 degrees Celsius.</text>
    </temperatureDependence>
</comment>
<comment type="subunit">
    <text evidence="3">Homotrimer.</text>
</comment>
<comment type="induction">
    <text evidence="4">Repressed by the transcriptional regulator GanR and induced by galactobiose. Also repressed by glucose.</text>
</comment>
<comment type="disruption phenotype">
    <text evidence="3">No chromogen 5-bromo-4-chloro-3-indolyl-beta-D-galactopyranoside (X-Gal) hydrolysis. Reduces beta-galactosidase activity observed with polygalacturonic acid, citrus and apple pectins, galactan and soy flour.</text>
</comment>
<comment type="similarity">
    <text evidence="7">Belongs to the glycosyl hydrolase 42 family.</text>
</comment>
<comment type="sequence caution" evidence="7">
    <conflict type="erroneous initiation">
        <sequence resource="EMBL-CDS" id="CAB08008"/>
    </conflict>
    <text>Extended N-terminus.</text>
</comment>
<comment type="sequence caution" evidence="7">
    <conflict type="erroneous initiation">
        <sequence resource="EMBL-CDS" id="CAB15418"/>
    </conflict>
    <text>Extended N-terminus.</text>
</comment>
<evidence type="ECO:0000250" key="1"/>
<evidence type="ECO:0000255" key="2"/>
<evidence type="ECO:0000269" key="3">
    <source>
    </source>
</evidence>
<evidence type="ECO:0000269" key="4">
    <source>
    </source>
</evidence>
<evidence type="ECO:0000303" key="5">
    <source>
    </source>
</evidence>
<evidence type="ECO:0000303" key="6">
    <source>
    </source>
</evidence>
<evidence type="ECO:0000305" key="7"/>
<reference key="1">
    <citation type="journal article" date="1997" name="J. Bacteriol.">
        <title>Isolation and characterization of the lacA gene encoding beta-galactosidase in Bacillus subtilis and a regulator gene, lacR.</title>
        <authorList>
            <person name="Daniel R.A."/>
            <person name="Haiech J."/>
            <person name="Denizot F."/>
            <person name="Errington J."/>
        </authorList>
    </citation>
    <scope>NUCLEOTIDE SEQUENCE [GENOMIC DNA]</scope>
</reference>
<reference key="2">
    <citation type="journal article" date="1997" name="Nature">
        <title>The complete genome sequence of the Gram-positive bacterium Bacillus subtilis.</title>
        <authorList>
            <person name="Kunst F."/>
            <person name="Ogasawara N."/>
            <person name="Moszer I."/>
            <person name="Albertini A.M."/>
            <person name="Alloni G."/>
            <person name="Azevedo V."/>
            <person name="Bertero M.G."/>
            <person name="Bessieres P."/>
            <person name="Bolotin A."/>
            <person name="Borchert S."/>
            <person name="Borriss R."/>
            <person name="Boursier L."/>
            <person name="Brans A."/>
            <person name="Braun M."/>
            <person name="Brignell S.C."/>
            <person name="Bron S."/>
            <person name="Brouillet S."/>
            <person name="Bruschi C.V."/>
            <person name="Caldwell B."/>
            <person name="Capuano V."/>
            <person name="Carter N.M."/>
            <person name="Choi S.-K."/>
            <person name="Codani J.-J."/>
            <person name="Connerton I.F."/>
            <person name="Cummings N.J."/>
            <person name="Daniel R.A."/>
            <person name="Denizot F."/>
            <person name="Devine K.M."/>
            <person name="Duesterhoeft A."/>
            <person name="Ehrlich S.D."/>
            <person name="Emmerson P.T."/>
            <person name="Entian K.-D."/>
            <person name="Errington J."/>
            <person name="Fabret C."/>
            <person name="Ferrari E."/>
            <person name="Foulger D."/>
            <person name="Fritz C."/>
            <person name="Fujita M."/>
            <person name="Fujita Y."/>
            <person name="Fuma S."/>
            <person name="Galizzi A."/>
            <person name="Galleron N."/>
            <person name="Ghim S.-Y."/>
            <person name="Glaser P."/>
            <person name="Goffeau A."/>
            <person name="Golightly E.J."/>
            <person name="Grandi G."/>
            <person name="Guiseppi G."/>
            <person name="Guy B.J."/>
            <person name="Haga K."/>
            <person name="Haiech J."/>
            <person name="Harwood C.R."/>
            <person name="Henaut A."/>
            <person name="Hilbert H."/>
            <person name="Holsappel S."/>
            <person name="Hosono S."/>
            <person name="Hullo M.-F."/>
            <person name="Itaya M."/>
            <person name="Jones L.-M."/>
            <person name="Joris B."/>
            <person name="Karamata D."/>
            <person name="Kasahara Y."/>
            <person name="Klaerr-Blanchard M."/>
            <person name="Klein C."/>
            <person name="Kobayashi Y."/>
            <person name="Koetter P."/>
            <person name="Koningstein G."/>
            <person name="Krogh S."/>
            <person name="Kumano M."/>
            <person name="Kurita K."/>
            <person name="Lapidus A."/>
            <person name="Lardinois S."/>
            <person name="Lauber J."/>
            <person name="Lazarevic V."/>
            <person name="Lee S.-M."/>
            <person name="Levine A."/>
            <person name="Liu H."/>
            <person name="Masuda S."/>
            <person name="Mauel C."/>
            <person name="Medigue C."/>
            <person name="Medina N."/>
            <person name="Mellado R.P."/>
            <person name="Mizuno M."/>
            <person name="Moestl D."/>
            <person name="Nakai S."/>
            <person name="Noback M."/>
            <person name="Noone D."/>
            <person name="O'Reilly M."/>
            <person name="Ogawa K."/>
            <person name="Ogiwara A."/>
            <person name="Oudega B."/>
            <person name="Park S.-H."/>
            <person name="Parro V."/>
            <person name="Pohl T.M."/>
            <person name="Portetelle D."/>
            <person name="Porwollik S."/>
            <person name="Prescott A.M."/>
            <person name="Presecan E."/>
            <person name="Pujic P."/>
            <person name="Purnelle B."/>
            <person name="Rapoport G."/>
            <person name="Rey M."/>
            <person name="Reynolds S."/>
            <person name="Rieger M."/>
            <person name="Rivolta C."/>
            <person name="Rocha E."/>
            <person name="Roche B."/>
            <person name="Rose M."/>
            <person name="Sadaie Y."/>
            <person name="Sato T."/>
            <person name="Scanlan E."/>
            <person name="Schleich S."/>
            <person name="Schroeter R."/>
            <person name="Scoffone F."/>
            <person name="Sekiguchi J."/>
            <person name="Sekowska A."/>
            <person name="Seror S.J."/>
            <person name="Serror P."/>
            <person name="Shin B.-S."/>
            <person name="Soldo B."/>
            <person name="Sorokin A."/>
            <person name="Tacconi E."/>
            <person name="Takagi T."/>
            <person name="Takahashi H."/>
            <person name="Takemaru K."/>
            <person name="Takeuchi M."/>
            <person name="Tamakoshi A."/>
            <person name="Tanaka T."/>
            <person name="Terpstra P."/>
            <person name="Tognoni A."/>
            <person name="Tosato V."/>
            <person name="Uchiyama S."/>
            <person name="Vandenbol M."/>
            <person name="Vannier F."/>
            <person name="Vassarotti A."/>
            <person name="Viari A."/>
            <person name="Wambutt R."/>
            <person name="Wedler E."/>
            <person name="Wedler H."/>
            <person name="Weitzenegger T."/>
            <person name="Winters P."/>
            <person name="Wipat A."/>
            <person name="Yamamoto H."/>
            <person name="Yamane K."/>
            <person name="Yasumoto K."/>
            <person name="Yata K."/>
            <person name="Yoshida K."/>
            <person name="Yoshikawa H.-F."/>
            <person name="Zumstein E."/>
            <person name="Yoshikawa H."/>
            <person name="Danchin A."/>
        </authorList>
    </citation>
    <scope>NUCLEOTIDE SEQUENCE [LARGE SCALE GENOMIC DNA]</scope>
    <source>
        <strain>168</strain>
    </source>
</reference>
<reference key="3">
    <citation type="journal article" date="2006" name="Appl. Environ. Microbiol.">
        <title>Bioinformatic, genetic, and biochemical evidence that some glycoside hydrolase family 42 beta-galactosidases are arabinogalactan type I oligomer hydrolases.</title>
        <authorList>
            <person name="Shipkowski S."/>
            <person name="Brenchley J.E."/>
        </authorList>
    </citation>
    <scope>NOMENCLATURE</scope>
    <scope>FUNCTION</scope>
    <scope>CATALYTIC ACTIVITY</scope>
    <scope>ACTIVITY REGULATION</scope>
    <scope>BIOPHYSICOCHEMICAL PROPERTIES</scope>
    <scope>SUBUNIT</scope>
    <scope>DISRUPTION PHENOTYPE</scope>
</reference>
<reference key="4">
    <citation type="journal article" date="2016" name="J. Bacteriol.">
        <title>Role of the ganSPQAB operon in degradation of galactan by Bacillus subtilis.</title>
        <authorList>
            <person name="Watzlawick H."/>
            <person name="Morabbi Heravi K."/>
            <person name="Altenbuchner J."/>
        </authorList>
    </citation>
    <scope>FUNCTION</scope>
    <scope>CATALYTIC ACTIVITY</scope>
    <scope>INDUCTION</scope>
</reference>
<organism>
    <name type="scientific">Bacillus subtilis (strain 168)</name>
    <dbReference type="NCBI Taxonomy" id="224308"/>
    <lineage>
        <taxon>Bacteria</taxon>
        <taxon>Bacillati</taxon>
        <taxon>Bacillota</taxon>
        <taxon>Bacilli</taxon>
        <taxon>Bacillales</taxon>
        <taxon>Bacillaceae</taxon>
        <taxon>Bacillus</taxon>
    </lineage>
</organism>
<feature type="chain" id="PRO_0000367026" description="Beta-galactosidase GanA">
    <location>
        <begin position="1"/>
        <end position="672"/>
    </location>
</feature>
<feature type="active site" description="Proton donor" evidence="2">
    <location>
        <position position="144"/>
    </location>
</feature>
<feature type="active site" description="Nucleophile" evidence="2">
    <location>
        <position position="308"/>
    </location>
</feature>
<feature type="binding site" evidence="1">
    <location>
        <position position="105"/>
    </location>
    <ligand>
        <name>substrate</name>
    </ligand>
</feature>
<feature type="binding site" evidence="1">
    <location>
        <position position="109"/>
    </location>
    <ligand>
        <name>Zn(2+)</name>
        <dbReference type="ChEBI" id="CHEBI:29105"/>
    </ligand>
</feature>
<feature type="binding site" evidence="1">
    <location>
        <position position="143"/>
    </location>
    <ligand>
        <name>substrate</name>
    </ligand>
</feature>
<feature type="binding site" evidence="1">
    <location>
        <position position="149"/>
    </location>
    <ligand>
        <name>Zn(2+)</name>
        <dbReference type="ChEBI" id="CHEBI:29105"/>
    </ligand>
</feature>
<feature type="binding site" evidence="1">
    <location>
        <position position="151"/>
    </location>
    <ligand>
        <name>Zn(2+)</name>
        <dbReference type="ChEBI" id="CHEBI:29105"/>
    </ligand>
</feature>
<feature type="binding site" evidence="1">
    <location>
        <position position="154"/>
    </location>
    <ligand>
        <name>Zn(2+)</name>
        <dbReference type="ChEBI" id="CHEBI:29105"/>
    </ligand>
</feature>
<feature type="binding site" evidence="1">
    <location>
        <position position="316"/>
    </location>
    <ligand>
        <name>substrate</name>
    </ligand>
</feature>
<feature type="binding site" evidence="1">
    <location>
        <begin position="356"/>
        <end position="359"/>
    </location>
    <ligand>
        <name>substrate</name>
    </ligand>
</feature>
<sequence length="672" mass="77499">MLHGGDYNPDQWLDRPDILADDIKLMKLSHTNTFSVGIFAWSALEPEEGVYQFEWLDDIFERIHSIGGRVILATPSGARPAWLSQTYPEVLRVNASRVKQLHGGRHNHCLTSKVYREKTRHINRLLAERYGHHPALLMWHISNEYGGDCHCDLCQHAFREWLKSKYDNSLKTLNHAWWTPFWSHTFNDWSQIESPSPIGENGLHGLNLDWRRFVTDQTISFYENEIIPLKELTPDIPITTNFMADTPDLIPYQGLDYSKFAKHVDAISWDAYPVWHNDWESTADLAMKVGFINDLYRSLKQQPFLLMECTPSAVNWHNVNKAKRPGMNLLSSMQMIAHGSDSVLYFQYRKSRGSSEKLHGAVVDHDNSPKNRVFQEVAKVGETLERLSEVVGTKRPAQTAILYDWENHWALEDAQGFAKATKRYPQTLQQHYRTFWEHDIPVDVITKEQDFSPYKLLIVPMLYLISEDTVSRLKAFTADGGTLVMTYISGVVNEHDLTYTGGWHPDLQAIFGVEPLETDTLYPKDRNAVSYRSQIYEMKDYATVIDVKTASVEAVYQEDFYARTPAVTSHEYQQGKAYFIGARLEDQFQRDFYEGLITDLSLSPVFPVRHGKGVSVQARQDQDNDYIFVMNFTEEKQLVTFDQSVKDIMTGDILSGDLTMEKYEVRIVVNTH</sequence>
<protein>
    <recommendedName>
        <fullName>Beta-galactosidase GanA</fullName>
        <shortName>Beta-gal</shortName>
        <ecNumber evidence="3 4">3.2.1.23</ecNumber>
    </recommendedName>
    <alternativeName>
        <fullName>Beta-1,4-galactooligomerase</fullName>
    </alternativeName>
    <alternativeName>
        <fullName>Galactooligomerase</fullName>
    </alternativeName>
</protein>
<accession>O07012</accession>
<accession>Q795J9</accession>
<dbReference type="EC" id="3.2.1.23" evidence="3 4"/>
<dbReference type="EMBL" id="Z94043">
    <property type="protein sequence ID" value="CAB08008.1"/>
    <property type="status" value="ALT_INIT"/>
    <property type="molecule type" value="Genomic_DNA"/>
</dbReference>
<dbReference type="EMBL" id="AL009126">
    <property type="protein sequence ID" value="CAB15418.1"/>
    <property type="status" value="ALT_INIT"/>
    <property type="molecule type" value="Genomic_DNA"/>
</dbReference>
<dbReference type="PIR" id="B69649">
    <property type="entry name" value="B69649"/>
</dbReference>
<dbReference type="RefSeq" id="NP_391293.1">
    <property type="nucleotide sequence ID" value="NC_000964.3"/>
</dbReference>
<dbReference type="RefSeq" id="WP_010886616.1">
    <property type="nucleotide sequence ID" value="NZ_OZ025638.1"/>
</dbReference>
<dbReference type="SMR" id="O07012"/>
<dbReference type="FunCoup" id="O07012">
    <property type="interactions" value="78"/>
</dbReference>
<dbReference type="STRING" id="224308.BSU34130"/>
<dbReference type="CAZy" id="GH42">
    <property type="family name" value="Glycoside Hydrolase Family 42"/>
</dbReference>
<dbReference type="PaxDb" id="224308-BSU34130"/>
<dbReference type="EnsemblBacteria" id="CAB15418">
    <property type="protein sequence ID" value="CAB15418"/>
    <property type="gene ID" value="BSU_34130"/>
</dbReference>
<dbReference type="GeneID" id="936313"/>
<dbReference type="KEGG" id="bsu:BSU34130"/>
<dbReference type="PATRIC" id="fig|224308.43.peg.3577"/>
<dbReference type="eggNOG" id="COG1874">
    <property type="taxonomic scope" value="Bacteria"/>
</dbReference>
<dbReference type="InParanoid" id="O07012"/>
<dbReference type="OrthoDB" id="9800974at2"/>
<dbReference type="BioCyc" id="BSUB:BSU34130-MONOMER"/>
<dbReference type="Proteomes" id="UP000001570">
    <property type="component" value="Chromosome"/>
</dbReference>
<dbReference type="GO" id="GO:0009341">
    <property type="term" value="C:beta-galactosidase complex"/>
    <property type="evidence" value="ECO:0007669"/>
    <property type="project" value="InterPro"/>
</dbReference>
<dbReference type="GO" id="GO:0004565">
    <property type="term" value="F:beta-galactosidase activity"/>
    <property type="evidence" value="ECO:0007669"/>
    <property type="project" value="UniProtKB-EC"/>
</dbReference>
<dbReference type="GO" id="GO:0046872">
    <property type="term" value="F:metal ion binding"/>
    <property type="evidence" value="ECO:0007669"/>
    <property type="project" value="UniProtKB-KW"/>
</dbReference>
<dbReference type="GO" id="GO:0006012">
    <property type="term" value="P:galactose metabolic process"/>
    <property type="evidence" value="ECO:0007669"/>
    <property type="project" value="InterPro"/>
</dbReference>
<dbReference type="CDD" id="cd03143">
    <property type="entry name" value="A4_beta-galactosidase_middle_domain"/>
    <property type="match status" value="1"/>
</dbReference>
<dbReference type="Gene3D" id="3.40.50.880">
    <property type="match status" value="1"/>
</dbReference>
<dbReference type="Gene3D" id="3.20.20.80">
    <property type="entry name" value="Glycosidases"/>
    <property type="match status" value="1"/>
</dbReference>
<dbReference type="Gene3D" id="2.60.40.1180">
    <property type="entry name" value="Golgi alpha-mannosidase II"/>
    <property type="match status" value="1"/>
</dbReference>
<dbReference type="InterPro" id="IPR013739">
    <property type="entry name" value="Beta_galactosidase_C"/>
</dbReference>
<dbReference type="InterPro" id="IPR013738">
    <property type="entry name" value="Beta_galactosidase_Trimer"/>
</dbReference>
<dbReference type="InterPro" id="IPR029062">
    <property type="entry name" value="Class_I_gatase-like"/>
</dbReference>
<dbReference type="InterPro" id="IPR003476">
    <property type="entry name" value="Glyco_hydro_42"/>
</dbReference>
<dbReference type="InterPro" id="IPR013529">
    <property type="entry name" value="Glyco_hydro_42_N"/>
</dbReference>
<dbReference type="InterPro" id="IPR013780">
    <property type="entry name" value="Glyco_hydro_b"/>
</dbReference>
<dbReference type="InterPro" id="IPR017853">
    <property type="entry name" value="Glycoside_hydrolase_SF"/>
</dbReference>
<dbReference type="PANTHER" id="PTHR36447">
    <property type="entry name" value="BETA-GALACTOSIDASE GANA"/>
    <property type="match status" value="1"/>
</dbReference>
<dbReference type="PANTHER" id="PTHR36447:SF1">
    <property type="entry name" value="BETA-GALACTOSIDASE GANA"/>
    <property type="match status" value="1"/>
</dbReference>
<dbReference type="Pfam" id="PF02449">
    <property type="entry name" value="Glyco_hydro_42"/>
    <property type="match status" value="1"/>
</dbReference>
<dbReference type="Pfam" id="PF08533">
    <property type="entry name" value="Glyco_hydro_42C"/>
    <property type="match status" value="1"/>
</dbReference>
<dbReference type="Pfam" id="PF08532">
    <property type="entry name" value="Glyco_hydro_42M"/>
    <property type="match status" value="1"/>
</dbReference>
<dbReference type="PIRSF" id="PIRSF001084">
    <property type="entry name" value="B-galactosidase"/>
    <property type="match status" value="1"/>
</dbReference>
<dbReference type="SUPFAM" id="SSF51445">
    <property type="entry name" value="(Trans)glycosidases"/>
    <property type="match status" value="1"/>
</dbReference>
<dbReference type="SUPFAM" id="SSF52317">
    <property type="entry name" value="Class I glutamine amidotransferase-like"/>
    <property type="match status" value="1"/>
</dbReference>
<keyword id="KW-0326">Glycosidase</keyword>
<keyword id="KW-0378">Hydrolase</keyword>
<keyword id="KW-0479">Metal-binding</keyword>
<keyword id="KW-1185">Reference proteome</keyword>
<keyword id="KW-0862">Zinc</keyword>